<dbReference type="EC" id="2.8.1.-"/>
<dbReference type="EMBL" id="CP000026">
    <property type="protein sequence ID" value="AAV77683.1"/>
    <property type="molecule type" value="Genomic_DNA"/>
</dbReference>
<dbReference type="RefSeq" id="WP_000904446.1">
    <property type="nucleotide sequence ID" value="NC_006511.1"/>
</dbReference>
<dbReference type="SMR" id="Q5PGB9"/>
<dbReference type="KEGG" id="spt:SPA1766"/>
<dbReference type="HOGENOM" id="CLU_153199_1_0_6"/>
<dbReference type="Proteomes" id="UP000008185">
    <property type="component" value="Chromosome"/>
</dbReference>
<dbReference type="GO" id="GO:0005737">
    <property type="term" value="C:cytoplasm"/>
    <property type="evidence" value="ECO:0007669"/>
    <property type="project" value="UniProtKB-SubCell"/>
</dbReference>
<dbReference type="GO" id="GO:0097163">
    <property type="term" value="F:sulfur carrier activity"/>
    <property type="evidence" value="ECO:0007669"/>
    <property type="project" value="TreeGrafter"/>
</dbReference>
<dbReference type="GO" id="GO:0016740">
    <property type="term" value="F:transferase activity"/>
    <property type="evidence" value="ECO:0007669"/>
    <property type="project" value="UniProtKB-KW"/>
</dbReference>
<dbReference type="GO" id="GO:0002143">
    <property type="term" value="P:tRNA wobble position uridine thiolation"/>
    <property type="evidence" value="ECO:0007669"/>
    <property type="project" value="TreeGrafter"/>
</dbReference>
<dbReference type="FunFam" id="1.10.10.370:FF:000001">
    <property type="entry name" value="Sulfurtransferase"/>
    <property type="match status" value="1"/>
</dbReference>
<dbReference type="FunFam" id="3.30.1420.10:FF:000001">
    <property type="entry name" value="Sulfurtransferase"/>
    <property type="match status" value="1"/>
</dbReference>
<dbReference type="Gene3D" id="3.30.1420.10">
    <property type="match status" value="1"/>
</dbReference>
<dbReference type="Gene3D" id="1.10.10.370">
    <property type="entry name" value="DsrC-like protein, C-terminal domain"/>
    <property type="match status" value="1"/>
</dbReference>
<dbReference type="InterPro" id="IPR042072">
    <property type="entry name" value="DsrC-like_C"/>
</dbReference>
<dbReference type="InterPro" id="IPR025526">
    <property type="entry name" value="DsrC-like_dom_sf"/>
</dbReference>
<dbReference type="InterPro" id="IPR043163">
    <property type="entry name" value="DsrC-like_N"/>
</dbReference>
<dbReference type="InterPro" id="IPR007453">
    <property type="entry name" value="DsrC/TusE"/>
</dbReference>
<dbReference type="NCBIfam" id="TIGR03342">
    <property type="entry name" value="dsrC_tusE_dsvC"/>
    <property type="match status" value="1"/>
</dbReference>
<dbReference type="NCBIfam" id="NF008562">
    <property type="entry name" value="PRK11508.1"/>
    <property type="match status" value="1"/>
</dbReference>
<dbReference type="PANTHER" id="PTHR37010">
    <property type="entry name" value="SULFURTRANSFERASE TUSE"/>
    <property type="match status" value="1"/>
</dbReference>
<dbReference type="PANTHER" id="PTHR37010:SF1">
    <property type="entry name" value="SULFURTRANSFERASE TUSE"/>
    <property type="match status" value="1"/>
</dbReference>
<dbReference type="Pfam" id="PF04358">
    <property type="entry name" value="DsrC"/>
    <property type="match status" value="1"/>
</dbReference>
<dbReference type="PIRSF" id="PIRSF006223">
    <property type="entry name" value="DsrC_TusE"/>
    <property type="match status" value="1"/>
</dbReference>
<dbReference type="SUPFAM" id="SSF69721">
    <property type="entry name" value="DsrC, the gamma subunit of dissimilatory sulfite reductase"/>
    <property type="match status" value="1"/>
</dbReference>
<reference key="1">
    <citation type="journal article" date="2004" name="Nat. Genet.">
        <title>Comparison of genome degradation in Paratyphi A and Typhi, human-restricted serovars of Salmonella enterica that cause typhoid.</title>
        <authorList>
            <person name="McClelland M."/>
            <person name="Sanderson K.E."/>
            <person name="Clifton S.W."/>
            <person name="Latreille P."/>
            <person name="Porwollik S."/>
            <person name="Sabo A."/>
            <person name="Meyer R."/>
            <person name="Bieri T."/>
            <person name="Ozersky P."/>
            <person name="McLellan M."/>
            <person name="Harkins C.R."/>
            <person name="Wang C."/>
            <person name="Nguyen C."/>
            <person name="Berghoff A."/>
            <person name="Elliott G."/>
            <person name="Kohlberg S."/>
            <person name="Strong C."/>
            <person name="Du F."/>
            <person name="Carter J."/>
            <person name="Kremizki C."/>
            <person name="Layman D."/>
            <person name="Leonard S."/>
            <person name="Sun H."/>
            <person name="Fulton L."/>
            <person name="Nash W."/>
            <person name="Miner T."/>
            <person name="Minx P."/>
            <person name="Delehaunty K."/>
            <person name="Fronick C."/>
            <person name="Magrini V."/>
            <person name="Nhan M."/>
            <person name="Warren W."/>
            <person name="Florea L."/>
            <person name="Spieth J."/>
            <person name="Wilson R.K."/>
        </authorList>
    </citation>
    <scope>NUCLEOTIDE SEQUENCE [LARGE SCALE GENOMIC DNA]</scope>
    <source>
        <strain>ATCC 9150 / SARB42</strain>
    </source>
</reference>
<accession>Q5PGB9</accession>
<feature type="chain" id="PRO_0000234615" description="Sulfurtransferase TusE">
    <location>
        <begin position="1"/>
        <end position="109"/>
    </location>
</feature>
<feature type="active site" description="Cysteine persulfide intermediate" evidence="1">
    <location>
        <position position="108"/>
    </location>
</feature>
<keyword id="KW-0963">Cytoplasm</keyword>
<keyword id="KW-0808">Transferase</keyword>
<keyword id="KW-0819">tRNA processing</keyword>
<evidence type="ECO:0000250" key="1"/>
<evidence type="ECO:0000305" key="2"/>
<proteinExistence type="inferred from homology"/>
<sequence>MLIFEGKEISTDSEGYLKETTQWSEALAVAIAANEGIELSAEHWEVVRFVREFYLEFNTSPAIRMLVKAMANKFGEEKGNSRYLYRLFPKGPAKQATKIAGLPKPVKCI</sequence>
<organism>
    <name type="scientific">Salmonella paratyphi A (strain ATCC 9150 / SARB42)</name>
    <dbReference type="NCBI Taxonomy" id="295319"/>
    <lineage>
        <taxon>Bacteria</taxon>
        <taxon>Pseudomonadati</taxon>
        <taxon>Pseudomonadota</taxon>
        <taxon>Gammaproteobacteria</taxon>
        <taxon>Enterobacterales</taxon>
        <taxon>Enterobacteriaceae</taxon>
        <taxon>Salmonella</taxon>
    </lineage>
</organism>
<comment type="function">
    <text evidence="1">Part of a sulfur-relay system required for 2-thiolation of 5-methylaminomethyl-2-thiouridine (mnm(5)s(2)U) at tRNA wobble positions. Could accept sulfur from TusD (By similarity).</text>
</comment>
<comment type="subunit">
    <text evidence="1">Interacts with the TusBCD complex. Interacts with MnmA (By similarity).</text>
</comment>
<comment type="subcellular location">
    <subcellularLocation>
        <location evidence="1">Cytoplasm</location>
    </subcellularLocation>
</comment>
<comment type="similarity">
    <text evidence="2">Belongs to the DsrC/TusE family.</text>
</comment>
<name>TUSE_SALPA</name>
<protein>
    <recommendedName>
        <fullName>Sulfurtransferase TusE</fullName>
        <ecNumber>2.8.1.-</ecNumber>
    </recommendedName>
    <alternativeName>
        <fullName>tRNA 2-thiouridine synthesizing protein E</fullName>
    </alternativeName>
</protein>
<gene>
    <name type="primary">tusE</name>
    <name type="ordered locus">SPA1766</name>
</gene>